<organism>
    <name type="scientific">Drosophila melanogaster</name>
    <name type="common">Fruit fly</name>
    <dbReference type="NCBI Taxonomy" id="7227"/>
    <lineage>
        <taxon>Eukaryota</taxon>
        <taxon>Metazoa</taxon>
        <taxon>Ecdysozoa</taxon>
        <taxon>Arthropoda</taxon>
        <taxon>Hexapoda</taxon>
        <taxon>Insecta</taxon>
        <taxon>Pterygota</taxon>
        <taxon>Neoptera</taxon>
        <taxon>Endopterygota</taxon>
        <taxon>Diptera</taxon>
        <taxon>Brachycera</taxon>
        <taxon>Muscomorpha</taxon>
        <taxon>Ephydroidea</taxon>
        <taxon>Drosophilidae</taxon>
        <taxon>Drosophila</taxon>
        <taxon>Sophophora</taxon>
    </lineage>
</organism>
<keyword id="KW-0256">Endoplasmic reticulum</keyword>
<keyword id="KW-0472">Membrane</keyword>
<keyword id="KW-1185">Reference proteome</keyword>
<gene>
    <name evidence="6" type="primary">EMC8-9</name>
    <name evidence="6" type="ORF">CG3501</name>
</gene>
<name>EMC89_DROME</name>
<comment type="function">
    <text evidence="3">Part of the endoplasmic reticulum membrane protein complex (EMC) that enables the energy-independent insertion into endoplasmic reticulum membranes of newly synthesized multi-pass membrane proteins like rhodopsins.</text>
</comment>
<comment type="subunit">
    <text evidence="5">Component of the ER membrane protein complex (EMC).</text>
</comment>
<comment type="interaction">
    <interactant intactId="EBI-189387">
        <id>Q9W1Y1</id>
    </interactant>
    <interactant intactId="EBI-136831">
        <id>Q9VEQ1</id>
        <label>EMC2A</label>
    </interactant>
    <organismsDiffer>false</organismsDiffer>
    <experiments>3</experiments>
</comment>
<comment type="interaction">
    <interactant intactId="EBI-189387">
        <id>Q9W1Y1</id>
    </interactant>
    <interactant intactId="EBI-101183">
        <id>Q9VEQ2</id>
        <label>EMC2B</label>
    </interactant>
    <organismsDiffer>false</organismsDiffer>
    <experiments>3</experiments>
</comment>
<comment type="subcellular location">
    <subcellularLocation>
        <location evidence="5">Endoplasmic reticulum membrane</location>
        <topology evidence="1">Peripheral membrane protein</topology>
        <orientation evidence="1">Cytoplasmic side</orientation>
    </subcellularLocation>
</comment>
<comment type="similarity">
    <text evidence="4">Belongs to the EMC8/EMC9 family.</text>
</comment>
<reference key="1">
    <citation type="journal article" date="2000" name="Science">
        <title>The genome sequence of Drosophila melanogaster.</title>
        <authorList>
            <person name="Adams M.D."/>
            <person name="Celniker S.E."/>
            <person name="Holt R.A."/>
            <person name="Evans C.A."/>
            <person name="Gocayne J.D."/>
            <person name="Amanatides P.G."/>
            <person name="Scherer S.E."/>
            <person name="Li P.W."/>
            <person name="Hoskins R.A."/>
            <person name="Galle R.F."/>
            <person name="George R.A."/>
            <person name="Lewis S.E."/>
            <person name="Richards S."/>
            <person name="Ashburner M."/>
            <person name="Henderson S.N."/>
            <person name="Sutton G.G."/>
            <person name="Wortman J.R."/>
            <person name="Yandell M.D."/>
            <person name="Zhang Q."/>
            <person name="Chen L.X."/>
            <person name="Brandon R.C."/>
            <person name="Rogers Y.-H.C."/>
            <person name="Blazej R.G."/>
            <person name="Champe M."/>
            <person name="Pfeiffer B.D."/>
            <person name="Wan K.H."/>
            <person name="Doyle C."/>
            <person name="Baxter E.G."/>
            <person name="Helt G."/>
            <person name="Nelson C.R."/>
            <person name="Miklos G.L.G."/>
            <person name="Abril J.F."/>
            <person name="Agbayani A."/>
            <person name="An H.-J."/>
            <person name="Andrews-Pfannkoch C."/>
            <person name="Baldwin D."/>
            <person name="Ballew R.M."/>
            <person name="Basu A."/>
            <person name="Baxendale J."/>
            <person name="Bayraktaroglu L."/>
            <person name="Beasley E.M."/>
            <person name="Beeson K.Y."/>
            <person name="Benos P.V."/>
            <person name="Berman B.P."/>
            <person name="Bhandari D."/>
            <person name="Bolshakov S."/>
            <person name="Borkova D."/>
            <person name="Botchan M.R."/>
            <person name="Bouck J."/>
            <person name="Brokstein P."/>
            <person name="Brottier P."/>
            <person name="Burtis K.C."/>
            <person name="Busam D.A."/>
            <person name="Butler H."/>
            <person name="Cadieu E."/>
            <person name="Center A."/>
            <person name="Chandra I."/>
            <person name="Cherry J.M."/>
            <person name="Cawley S."/>
            <person name="Dahlke C."/>
            <person name="Davenport L.B."/>
            <person name="Davies P."/>
            <person name="de Pablos B."/>
            <person name="Delcher A."/>
            <person name="Deng Z."/>
            <person name="Mays A.D."/>
            <person name="Dew I."/>
            <person name="Dietz S.M."/>
            <person name="Dodson K."/>
            <person name="Doup L.E."/>
            <person name="Downes M."/>
            <person name="Dugan-Rocha S."/>
            <person name="Dunkov B.C."/>
            <person name="Dunn P."/>
            <person name="Durbin K.J."/>
            <person name="Evangelista C.C."/>
            <person name="Ferraz C."/>
            <person name="Ferriera S."/>
            <person name="Fleischmann W."/>
            <person name="Fosler C."/>
            <person name="Gabrielian A.E."/>
            <person name="Garg N.S."/>
            <person name="Gelbart W.M."/>
            <person name="Glasser K."/>
            <person name="Glodek A."/>
            <person name="Gong F."/>
            <person name="Gorrell J.H."/>
            <person name="Gu Z."/>
            <person name="Guan P."/>
            <person name="Harris M."/>
            <person name="Harris N.L."/>
            <person name="Harvey D.A."/>
            <person name="Heiman T.J."/>
            <person name="Hernandez J.R."/>
            <person name="Houck J."/>
            <person name="Hostin D."/>
            <person name="Houston K.A."/>
            <person name="Howland T.J."/>
            <person name="Wei M.-H."/>
            <person name="Ibegwam C."/>
            <person name="Jalali M."/>
            <person name="Kalush F."/>
            <person name="Karpen G.H."/>
            <person name="Ke Z."/>
            <person name="Kennison J.A."/>
            <person name="Ketchum K.A."/>
            <person name="Kimmel B.E."/>
            <person name="Kodira C.D."/>
            <person name="Kraft C.L."/>
            <person name="Kravitz S."/>
            <person name="Kulp D."/>
            <person name="Lai Z."/>
            <person name="Lasko P."/>
            <person name="Lei Y."/>
            <person name="Levitsky A.A."/>
            <person name="Li J.H."/>
            <person name="Li Z."/>
            <person name="Liang Y."/>
            <person name="Lin X."/>
            <person name="Liu X."/>
            <person name="Mattei B."/>
            <person name="McIntosh T.C."/>
            <person name="McLeod M.P."/>
            <person name="McPherson D."/>
            <person name="Merkulov G."/>
            <person name="Milshina N.V."/>
            <person name="Mobarry C."/>
            <person name="Morris J."/>
            <person name="Moshrefi A."/>
            <person name="Mount S.M."/>
            <person name="Moy M."/>
            <person name="Murphy B."/>
            <person name="Murphy L."/>
            <person name="Muzny D.M."/>
            <person name="Nelson D.L."/>
            <person name="Nelson D.R."/>
            <person name="Nelson K.A."/>
            <person name="Nixon K."/>
            <person name="Nusskern D.R."/>
            <person name="Pacleb J.M."/>
            <person name="Palazzolo M."/>
            <person name="Pittman G.S."/>
            <person name="Pan S."/>
            <person name="Pollard J."/>
            <person name="Puri V."/>
            <person name="Reese M.G."/>
            <person name="Reinert K."/>
            <person name="Remington K."/>
            <person name="Saunders R.D.C."/>
            <person name="Scheeler F."/>
            <person name="Shen H."/>
            <person name="Shue B.C."/>
            <person name="Siden-Kiamos I."/>
            <person name="Simpson M."/>
            <person name="Skupski M.P."/>
            <person name="Smith T.J."/>
            <person name="Spier E."/>
            <person name="Spradling A.C."/>
            <person name="Stapleton M."/>
            <person name="Strong R."/>
            <person name="Sun E."/>
            <person name="Svirskas R."/>
            <person name="Tector C."/>
            <person name="Turner R."/>
            <person name="Venter E."/>
            <person name="Wang A.H."/>
            <person name="Wang X."/>
            <person name="Wang Z.-Y."/>
            <person name="Wassarman D.A."/>
            <person name="Weinstock G.M."/>
            <person name="Weissenbach J."/>
            <person name="Williams S.M."/>
            <person name="Woodage T."/>
            <person name="Worley K.C."/>
            <person name="Wu D."/>
            <person name="Yang S."/>
            <person name="Yao Q.A."/>
            <person name="Ye J."/>
            <person name="Yeh R.-F."/>
            <person name="Zaveri J.S."/>
            <person name="Zhan M."/>
            <person name="Zhang G."/>
            <person name="Zhao Q."/>
            <person name="Zheng L."/>
            <person name="Zheng X.H."/>
            <person name="Zhong F.N."/>
            <person name="Zhong W."/>
            <person name="Zhou X."/>
            <person name="Zhu S.C."/>
            <person name="Zhu X."/>
            <person name="Smith H.O."/>
            <person name="Gibbs R.A."/>
            <person name="Myers E.W."/>
            <person name="Rubin G.M."/>
            <person name="Venter J.C."/>
        </authorList>
    </citation>
    <scope>NUCLEOTIDE SEQUENCE [LARGE SCALE GENOMIC DNA]</scope>
    <source>
        <strain>Berkeley</strain>
    </source>
</reference>
<reference key="2">
    <citation type="journal article" date="2002" name="Genome Biol.">
        <title>Annotation of the Drosophila melanogaster euchromatic genome: a systematic review.</title>
        <authorList>
            <person name="Misra S."/>
            <person name="Crosby M.A."/>
            <person name="Mungall C.J."/>
            <person name="Matthews B.B."/>
            <person name="Campbell K.S."/>
            <person name="Hradecky P."/>
            <person name="Huang Y."/>
            <person name="Kaminker J.S."/>
            <person name="Millburn G.H."/>
            <person name="Prochnik S.E."/>
            <person name="Smith C.D."/>
            <person name="Tupy J.L."/>
            <person name="Whitfield E.J."/>
            <person name="Bayraktaroglu L."/>
            <person name="Berman B.P."/>
            <person name="Bettencourt B.R."/>
            <person name="Celniker S.E."/>
            <person name="de Grey A.D.N.J."/>
            <person name="Drysdale R.A."/>
            <person name="Harris N.L."/>
            <person name="Richter J."/>
            <person name="Russo S."/>
            <person name="Schroeder A.J."/>
            <person name="Shu S.Q."/>
            <person name="Stapleton M."/>
            <person name="Yamada C."/>
            <person name="Ashburner M."/>
            <person name="Gelbart W.M."/>
            <person name="Rubin G.M."/>
            <person name="Lewis S.E."/>
        </authorList>
    </citation>
    <scope>GENOME REANNOTATION</scope>
    <source>
        <strain>Berkeley</strain>
    </source>
</reference>
<reference key="3">
    <citation type="journal article" date="2020" name="Cell Death Differ.">
        <title>ER complex proteins are required for rhodopsin biosynthesis and photoreceptor survival in Drosophila and mice.</title>
        <authorList>
            <person name="Xiong L."/>
            <person name="Zhang L."/>
            <person name="Yang Y."/>
            <person name="Li N."/>
            <person name="Lai W."/>
            <person name="Wang F."/>
            <person name="Zhu X."/>
            <person name="Wang T."/>
        </authorList>
    </citation>
    <scope>FUNCTION</scope>
    <scope>SUBUNIT</scope>
    <scope>SUBCELLULAR LOCATION</scope>
</reference>
<feature type="chain" id="PRO_0000221191" description="ER membrane protein complex subunit 8/9 homolog">
    <location>
        <begin position="1"/>
        <end position="203"/>
    </location>
</feature>
<feature type="domain" description="MPN" evidence="2">
    <location>
        <begin position="4"/>
        <end position="140"/>
    </location>
</feature>
<evidence type="ECO:0000250" key="1">
    <source>
        <dbReference type="UniProtKB" id="O43402"/>
    </source>
</evidence>
<evidence type="ECO:0000255" key="2">
    <source>
        <dbReference type="PROSITE-ProRule" id="PRU01182"/>
    </source>
</evidence>
<evidence type="ECO:0000269" key="3">
    <source>
    </source>
</evidence>
<evidence type="ECO:0000305" key="4"/>
<evidence type="ECO:0000305" key="5">
    <source>
    </source>
</evidence>
<evidence type="ECO:0000312" key="6">
    <source>
        <dbReference type="FlyBase" id="FBgn0034791"/>
    </source>
</evidence>
<dbReference type="EMBL" id="AE013599">
    <property type="protein sequence ID" value="AAF46921.1"/>
    <property type="molecule type" value="Genomic_DNA"/>
</dbReference>
<dbReference type="RefSeq" id="NP_611731.1">
    <property type="nucleotide sequence ID" value="NM_137887.4"/>
</dbReference>
<dbReference type="SMR" id="Q9W1Y1"/>
<dbReference type="BioGRID" id="63246">
    <property type="interactions" value="11"/>
</dbReference>
<dbReference type="ComplexPortal" id="CPX-2445">
    <property type="entry name" value="Endoplasmic reticulum membrane complex, EMC2A variant"/>
</dbReference>
<dbReference type="ComplexPortal" id="CPX-2451">
    <property type="entry name" value="Endoplasmic reticulum membrane complex, EMC2B variant"/>
</dbReference>
<dbReference type="DIP" id="DIP-22682N"/>
<dbReference type="FunCoup" id="Q9W1Y1">
    <property type="interactions" value="1908"/>
</dbReference>
<dbReference type="IntAct" id="Q9W1Y1">
    <property type="interactions" value="11"/>
</dbReference>
<dbReference type="STRING" id="7227.FBpp0071818"/>
<dbReference type="PaxDb" id="7227-FBpp0071818"/>
<dbReference type="EnsemblMetazoa" id="FBtr0071907">
    <property type="protein sequence ID" value="FBpp0071818"/>
    <property type="gene ID" value="FBgn0034791"/>
</dbReference>
<dbReference type="GeneID" id="37635"/>
<dbReference type="KEGG" id="dme:Dmel_CG3501"/>
<dbReference type="UCSC" id="CG3501-RA">
    <property type="organism name" value="d. melanogaster"/>
</dbReference>
<dbReference type="AGR" id="FB:FBgn0034791"/>
<dbReference type="CTD" id="37635"/>
<dbReference type="FlyBase" id="FBgn0034791">
    <property type="gene designation" value="EMC8-9"/>
</dbReference>
<dbReference type="VEuPathDB" id="VectorBase:FBgn0034791"/>
<dbReference type="eggNOG" id="KOG3289">
    <property type="taxonomic scope" value="Eukaryota"/>
</dbReference>
<dbReference type="GeneTree" id="ENSGT00390000006738"/>
<dbReference type="HOGENOM" id="CLU_087337_0_1_1"/>
<dbReference type="InParanoid" id="Q9W1Y1"/>
<dbReference type="OMA" id="PHCAING"/>
<dbReference type="OrthoDB" id="194468at2759"/>
<dbReference type="PhylomeDB" id="Q9W1Y1"/>
<dbReference type="BioGRID-ORCS" id="37635">
    <property type="hits" value="0 hits in 3 CRISPR screens"/>
</dbReference>
<dbReference type="GenomeRNAi" id="37635"/>
<dbReference type="PRO" id="PR:Q9W1Y1"/>
<dbReference type="Proteomes" id="UP000000803">
    <property type="component" value="Chromosome 2R"/>
</dbReference>
<dbReference type="Bgee" id="FBgn0034791">
    <property type="expression patterns" value="Expressed in spermatocyte in testis and 109 other cell types or tissues"/>
</dbReference>
<dbReference type="ExpressionAtlas" id="Q9W1Y1">
    <property type="expression patterns" value="baseline and differential"/>
</dbReference>
<dbReference type="GO" id="GO:0072546">
    <property type="term" value="C:EMC complex"/>
    <property type="evidence" value="ECO:0000353"/>
    <property type="project" value="FlyBase"/>
</dbReference>
<dbReference type="GO" id="GO:0012505">
    <property type="term" value="C:endomembrane system"/>
    <property type="evidence" value="ECO:0007005"/>
    <property type="project" value="FlyBase"/>
</dbReference>
<dbReference type="GO" id="GO:0071816">
    <property type="term" value="P:tail-anchored membrane protein insertion into ER membrane"/>
    <property type="evidence" value="ECO:0000315"/>
    <property type="project" value="FlyBase"/>
</dbReference>
<dbReference type="CDD" id="cd08060">
    <property type="entry name" value="MPN_UPF0172"/>
    <property type="match status" value="1"/>
</dbReference>
<dbReference type="InterPro" id="IPR005366">
    <property type="entry name" value="EMC8/9"/>
</dbReference>
<dbReference type="InterPro" id="IPR037518">
    <property type="entry name" value="MPN"/>
</dbReference>
<dbReference type="PANTHER" id="PTHR12941">
    <property type="entry name" value="ER MEMBRANE PROTEIN COMPLEX"/>
    <property type="match status" value="1"/>
</dbReference>
<dbReference type="PANTHER" id="PTHR12941:SF10">
    <property type="entry name" value="ER MEMBRANE PROTEIN COMPLEX SUBUNIT 8_9 HOMOLOG"/>
    <property type="match status" value="1"/>
</dbReference>
<dbReference type="Pfam" id="PF03665">
    <property type="entry name" value="UPF0172"/>
    <property type="match status" value="1"/>
</dbReference>
<dbReference type="PROSITE" id="PS50249">
    <property type="entry name" value="MPN"/>
    <property type="match status" value="1"/>
</dbReference>
<proteinExistence type="evidence at protein level"/>
<protein>
    <recommendedName>
        <fullName>ER membrane protein complex subunit 8/9 homolog</fullName>
    </recommendedName>
</protein>
<accession>Q9W1Y1</accession>
<sequence length="203" mass="22781">MCDYKVSERAYAKLIFHAAKYPHQAVNGLLLAEKTSKGSQVEIVDAIPLFHQCLYVTPMAEVALMLIDAHAEREGLVIAGYYAAPENFYDNQVDKTPAAKIADKIQENFKNACFVVVDNKLMTLQHDRAAIQVFNCPGDSGARWSKAKFTLSQASDTLEGVSLLLKRGAMRDLVDFDNHLDNPDKNWTNDFLNQPLNDLQKLY</sequence>